<reference key="1">
    <citation type="journal article" date="1998" name="Nucleic Acids Res.">
        <title>SAF-B couples transcription and pre-mRNA splicing to SAR/MAR elements.</title>
        <authorList>
            <person name="Nayler O."/>
            <person name="Straetling W."/>
            <person name="Bourquin J.-P."/>
            <person name="Stagljar I."/>
            <person name="Lindemann L."/>
            <person name="Jasper H."/>
            <person name="Hartmann A.M."/>
            <person name="Fackelmeyer F.O."/>
            <person name="Ullrich A."/>
            <person name="Stamm S."/>
        </authorList>
    </citation>
    <scope>NUCLEOTIDE SEQUENCE [MRNA]</scope>
    <scope>CHARACTERIZATION</scope>
    <scope>INTERACTION WITH POLR2A; SFRS1; SFRS9 AND SFR10</scope>
    <scope>SUBCELLULAR LOCATION</scope>
</reference>
<reference key="2">
    <citation type="journal article" date="2001" name="J. Biol. Chem.">
        <title>The STAR/GSG family protein rSLM-2 regulates the selection of alternative splice sites.</title>
        <authorList>
            <person name="Stoss O."/>
            <person name="Olbrich M."/>
            <person name="Hartmann A.M."/>
            <person name="Koenig H."/>
            <person name="Memmott J."/>
            <person name="Andreadis A."/>
            <person name="Stamm S."/>
        </authorList>
    </citation>
    <scope>INTERACTION WITH KHDRBS3 AND CLK2</scope>
    <scope>PHOSPHORYLATION</scope>
    <source>
        <tissue>Brain</tissue>
    </source>
</reference>
<reference key="3">
    <citation type="journal article" date="2012" name="Nat. Commun.">
        <title>Quantitative maps of protein phosphorylation sites across 14 different rat organs and tissues.</title>
        <authorList>
            <person name="Lundby A."/>
            <person name="Secher A."/>
            <person name="Lage K."/>
            <person name="Nordsborg N.B."/>
            <person name="Dmytriyev A."/>
            <person name="Lundby C."/>
            <person name="Olsen J.V."/>
        </authorList>
    </citation>
    <scope>PHOSPHORYLATION [LARGE SCALE ANALYSIS] AT SER-24 AND SER-208</scope>
    <scope>IDENTIFICATION BY MASS SPECTROMETRY [LARGE SCALE ANALYSIS]</scope>
</reference>
<keyword id="KW-0007">Acetylation</keyword>
<keyword id="KW-0238">DNA-binding</keyword>
<keyword id="KW-1017">Isopeptide bond</keyword>
<keyword id="KW-0488">Methylation</keyword>
<keyword id="KW-0539">Nucleus</keyword>
<keyword id="KW-0597">Phosphoprotein</keyword>
<keyword id="KW-1185">Reference proteome</keyword>
<keyword id="KW-0678">Repressor</keyword>
<keyword id="KW-0694">RNA-binding</keyword>
<keyword id="KW-0804">Transcription</keyword>
<keyword id="KW-0805">Transcription regulation</keyword>
<keyword id="KW-0832">Ubl conjugation</keyword>
<comment type="function">
    <text evidence="2 3">Binds to scaffold/matrix attachment region (S/MAR) DNA and forms a molecular assembly point to allow the formation of a 'transcriptosomal' complex (consisting of SR proteins and RNA polymerase II) coupling transcription and RNA processing (By similarity). Functions as an estrogen receptor corepressor and can also bind to the HSP27 promoter and decrease its transcription (By similarity). Thereby acts as a negative regulator of cell proliferation (By similarity). When associated with RBMX, binds to and stimulates transcription from the SREBF1 promoter (By similarity).</text>
</comment>
<comment type="subunit">
    <text evidence="2 3 8 9">Monomer and homodimer (By similarity). Interacts with KHDRBS3 (PubMed:11118435). Interacts with CLK2 (PubMed:11118435). Interacts with POLR2A, ASF/SRSF1, SRp30c/SRFS9 and TRA2B/SFRS10 (PubMed:9671816). Interacts with SRPK1 and inhibits its activity (By similarity). Interacts with RBMX (By similarity). Interacts with FUS (By similarity). Interacts with ZBED4 (By similarity).</text>
</comment>
<comment type="interaction">
    <interactant intactId="EBI-539530">
        <id>O88453</id>
    </interactant>
    <interactant intactId="EBI-539478">
        <id>Q96SB4</id>
        <label>SRPK1</label>
    </interactant>
    <organismsDiffer>true</organismsDiffer>
    <experiments>2</experiments>
</comment>
<comment type="subcellular location">
    <subcellularLocation>
        <location evidence="9">Nucleus</location>
    </subcellularLocation>
</comment>
<comment type="PTM">
    <text evidence="8">Phosphorylated by CDC-like kinase 2 (CLK2).</text>
</comment>
<comment type="PTM">
    <text evidence="3">Sumoylated by PIAS1 with SUMO1 and SUMO2/3, desumoylated by SENP1. Sumoylation is required for transcriptional repressor activity.</text>
</comment>
<comment type="sequence caution" evidence="10">
    <conflict type="frameshift">
        <sequence resource="EMBL-CDS" id="AAC29479"/>
    </conflict>
</comment>
<feature type="initiator methionine" description="Removed" evidence="3">
    <location>
        <position position="1"/>
    </location>
</feature>
<feature type="chain" id="PRO_0000081906" description="Scaffold attachment factor B1">
    <location>
        <begin position="2"/>
        <end position="931"/>
    </location>
</feature>
<feature type="domain" description="SAP" evidence="6">
    <location>
        <begin position="31"/>
        <end position="65"/>
    </location>
</feature>
<feature type="domain" description="RRM" evidence="5">
    <location>
        <begin position="428"/>
        <end position="506"/>
    </location>
</feature>
<feature type="region of interest" description="Disordered" evidence="7">
    <location>
        <begin position="1"/>
        <end position="35"/>
    </location>
</feature>
<feature type="region of interest" description="Disordered" evidence="7">
    <location>
        <begin position="64"/>
        <end position="121"/>
    </location>
</feature>
<feature type="region of interest" description="Disordered" evidence="7">
    <location>
        <begin position="205"/>
        <end position="304"/>
    </location>
</feature>
<feature type="region of interest" description="Disordered" evidence="7">
    <location>
        <begin position="316"/>
        <end position="430"/>
    </location>
</feature>
<feature type="region of interest" description="Disordered" evidence="7">
    <location>
        <begin position="500"/>
        <end position="663"/>
    </location>
</feature>
<feature type="region of interest" description="Interaction with POLR2A; SFRS1; SFRS9 and SFRS10" evidence="9">
    <location>
        <begin position="550"/>
        <end position="816"/>
    </location>
</feature>
<feature type="region of interest" description="Disordered" evidence="7">
    <location>
        <begin position="691"/>
        <end position="720"/>
    </location>
</feature>
<feature type="region of interest" description="Disordered" evidence="7">
    <location>
        <begin position="759"/>
        <end position="843"/>
    </location>
</feature>
<feature type="region of interest" description="Disordered" evidence="7">
    <location>
        <begin position="872"/>
        <end position="931"/>
    </location>
</feature>
<feature type="short sequence motif" description="Nuclear localization signal" evidence="4">
    <location>
        <begin position="621"/>
        <end position="638"/>
    </location>
</feature>
<feature type="compositionally biased region" description="Low complexity" evidence="7">
    <location>
        <begin position="1"/>
        <end position="24"/>
    </location>
</feature>
<feature type="compositionally biased region" description="Acidic residues" evidence="7">
    <location>
        <begin position="67"/>
        <end position="77"/>
    </location>
</feature>
<feature type="compositionally biased region" description="Acidic residues" evidence="7">
    <location>
        <begin position="98"/>
        <end position="118"/>
    </location>
</feature>
<feature type="compositionally biased region" description="Basic and acidic residues" evidence="7">
    <location>
        <begin position="224"/>
        <end position="233"/>
    </location>
</feature>
<feature type="compositionally biased region" description="Acidic residues" evidence="7">
    <location>
        <begin position="267"/>
        <end position="287"/>
    </location>
</feature>
<feature type="compositionally biased region" description="Polar residues" evidence="7">
    <location>
        <begin position="341"/>
        <end position="356"/>
    </location>
</feature>
<feature type="compositionally biased region" description="Basic and acidic residues" evidence="7">
    <location>
        <begin position="368"/>
        <end position="380"/>
    </location>
</feature>
<feature type="compositionally biased region" description="Basic and acidic residues" evidence="7">
    <location>
        <begin position="412"/>
        <end position="423"/>
    </location>
</feature>
<feature type="compositionally biased region" description="Basic and acidic residues" evidence="7">
    <location>
        <begin position="500"/>
        <end position="573"/>
    </location>
</feature>
<feature type="compositionally biased region" description="Basic and acidic residues" evidence="7">
    <location>
        <begin position="581"/>
        <end position="592"/>
    </location>
</feature>
<feature type="compositionally biased region" description="Basic and acidic residues" evidence="7">
    <location>
        <begin position="603"/>
        <end position="663"/>
    </location>
</feature>
<feature type="compositionally biased region" description="Basic and acidic residues" evidence="7">
    <location>
        <begin position="759"/>
        <end position="820"/>
    </location>
</feature>
<feature type="modified residue" description="N-acetylalanine" evidence="3">
    <location>
        <position position="2"/>
    </location>
</feature>
<feature type="modified residue" description="Phosphoserine" evidence="11">
    <location>
        <position position="24"/>
    </location>
</feature>
<feature type="modified residue" description="Phosphoserine" evidence="3">
    <location>
        <position position="55"/>
    </location>
</feature>
<feature type="modified residue" description="Phosphoserine" evidence="3">
    <location>
        <position position="79"/>
    </location>
</feature>
<feature type="modified residue" description="Phosphoserine" evidence="3">
    <location>
        <position position="194"/>
    </location>
</feature>
<feature type="modified residue" description="Phosphoserine" evidence="3">
    <location>
        <position position="196"/>
    </location>
</feature>
<feature type="modified residue" description="Phosphoserine" evidence="11">
    <location>
        <position position="208"/>
    </location>
</feature>
<feature type="modified residue" description="Phosphoserine" evidence="3">
    <location>
        <position position="405"/>
    </location>
</feature>
<feature type="modified residue" description="Phosphoserine" evidence="3">
    <location>
        <position position="406"/>
    </location>
</feature>
<feature type="modified residue" description="Phosphoserine" evidence="3">
    <location>
        <position position="437"/>
    </location>
</feature>
<feature type="modified residue" description="Phosphoserine" evidence="3">
    <location>
        <position position="602"/>
    </location>
</feature>
<feature type="modified residue" description="Phosphoserine" evidence="3">
    <location>
        <position position="604"/>
    </location>
</feature>
<feature type="modified residue" description="Phosphoserine" evidence="3">
    <location>
        <position position="623"/>
    </location>
</feature>
<feature type="modified residue" description="Phosphoserine" evidence="3">
    <location>
        <position position="626"/>
    </location>
</feature>
<feature type="modified residue" description="N6-acetyllysine" evidence="3">
    <location>
        <position position="629"/>
    </location>
</feature>
<feature type="modified residue" description="Omega-N-methylarginine" evidence="3">
    <location>
        <position position="834"/>
    </location>
</feature>
<feature type="modified residue" description="Asymmetric dimethylarginine" evidence="3">
    <location>
        <position position="892"/>
    </location>
</feature>
<feature type="modified residue" description="Asymmetric dimethylarginine" evidence="3">
    <location>
        <position position="898"/>
    </location>
</feature>
<feature type="modified residue" description="Asymmetric dimethylarginine" evidence="3">
    <location>
        <position position="908"/>
    </location>
</feature>
<feature type="modified residue" description="Asymmetric dimethylarginine" evidence="2">
    <location>
        <position position="914"/>
    </location>
</feature>
<feature type="cross-link" description="Glycyl lysine isopeptide (Lys-Gly) (interchain with G-Cter in SUMO2)" evidence="3">
    <location>
        <position position="171"/>
    </location>
</feature>
<feature type="cross-link" description="Glycyl lysine isopeptide (Lys-Gly) (interchain with G-Cter in SUMO2)" evidence="3">
    <location>
        <position position="185"/>
    </location>
</feature>
<feature type="cross-link" description="Glycyl lysine isopeptide (Lys-Gly) (interchain with G-Cter in SUMO)" evidence="1">
    <location>
        <position position="230"/>
    </location>
</feature>
<feature type="cross-link" description="Glycyl lysine isopeptide (Lys-Gly) (interchain with G-Cter in SUMO)" evidence="1">
    <location>
        <position position="316"/>
    </location>
</feature>
<feature type="cross-link" description="Glycyl lysine isopeptide (Lys-Gly) (interchain with G-Cter in SUMO2)" evidence="3">
    <location>
        <position position="403"/>
    </location>
</feature>
<feature type="cross-link" description="Glycyl lysine isopeptide (Lys-Gly) (interchain with G-Cter in SUMO2)" evidence="3">
    <location>
        <position position="414"/>
    </location>
</feature>
<feature type="cross-link" description="Glycyl lysine isopeptide (Lys-Gly) (interchain with G-Cter in SUMO2)" evidence="3">
    <location>
        <position position="505"/>
    </location>
</feature>
<feature type="cross-link" description="Glycyl lysine isopeptide (Lys-Gly) (interchain with G-Cter in SUMO2)" evidence="3">
    <location>
        <position position="536"/>
    </location>
</feature>
<feature type="cross-link" description="Glycyl lysine isopeptide (Lys-Gly) (interchain with G-Cter in SUMO2)" evidence="3">
    <location>
        <position position="565"/>
    </location>
</feature>
<feature type="cross-link" description="Glycyl lysine isopeptide (Lys-Gly) (interchain with G-Cter in SUMO2)" evidence="3">
    <location>
        <position position="592"/>
    </location>
</feature>
<feature type="cross-link" description="Glycyl lysine isopeptide (Lys-Gly) (interchain with G-Cter in SUMO1); alternate" evidence="3">
    <location>
        <position position="600"/>
    </location>
</feature>
<feature type="cross-link" description="Glycyl lysine isopeptide (Lys-Gly) (interchain with G-Cter in SUMO2); alternate" evidence="3">
    <location>
        <position position="600"/>
    </location>
</feature>
<sequence>MAETLSGLGDSGAASAAAVSSAASETGTRRLSDLRVIDLRAELRKRNLTSSGNKSVLMERLKKAIEEEGGNPDEIEVISEGNKKMPKRPSKGKKPEDEGVEDNGLEENSGDGQEDVETSLENLQDMDMMDISVLDEADIDNGSVADCVEEEEEATLPEGLGLLRIGRLQSKGLPEQLQELAIDDKEAINNVDTSSSDFTILQEMEEASLEPENEKILDILGETCKSEPVKEEGSELEQPFAQATSSVGPDRKLAEEEDLFESCGHPEEEEEEEEEEEQEEEQEEEGDLALASSSKSESSSTRCQWSEADALLAVVKREPAEAPGGGTGMDREPVGLEEPVEQSSTAAQLPETTSQELVRAPTAAPSPEPRDSKDDVKKFAFDACNDVPAAPKESSASEGADQKMSSVEDDSDTKRLSREEKGRSSCGRNFWVSGLSSTTRATDLKNLFSRYGKVVGAKVVTNARSPGARCYGFVTMSTAEEATKCINHLHKTELHGKMISVEKAKSEPAGKRVPDRRDGDSKKEKTSTSDRSANLKREEKGDRKDDAKKTDDGSTEKSKDADDQKPGPSERSRTTKSGSRGTERTVVMDKSKGVPVISVKTSGSKERASKSQDRKSVSREKRSVVSFDKVKESRKSRDSESRRERERERSEREQRLQAQWEREERERLEIARERLAFHRHRLERERMERERLERERMHVEQERRREQERIHREREELRRQQELRYEQERRPAVRRPYEVDGRRDDAYWPEAKRAALDDRYHSDFSRQDRFHDFDHRDRGRYPNHSVDRREGSRSMMGDREGQHYPERHGGPERHGRDSRDGWGYGSNKRLSEGRGLPLLPRRDWGEHARRLEDDRAWQGTADGGMMERDQQRWQGGERSMSGHSGPGHMMNRGGMSGRGSFAPGGASRRHVIPRGGMQAGFGGTEPGQQTQ</sequence>
<evidence type="ECO:0000250" key="1"/>
<evidence type="ECO:0000250" key="2">
    <source>
        <dbReference type="UniProtKB" id="D3YXK2"/>
    </source>
</evidence>
<evidence type="ECO:0000250" key="3">
    <source>
        <dbReference type="UniProtKB" id="Q15424"/>
    </source>
</evidence>
<evidence type="ECO:0000255" key="4"/>
<evidence type="ECO:0000255" key="5">
    <source>
        <dbReference type="PROSITE-ProRule" id="PRU00176"/>
    </source>
</evidence>
<evidence type="ECO:0000255" key="6">
    <source>
        <dbReference type="PROSITE-ProRule" id="PRU00186"/>
    </source>
</evidence>
<evidence type="ECO:0000256" key="7">
    <source>
        <dbReference type="SAM" id="MobiDB-lite"/>
    </source>
</evidence>
<evidence type="ECO:0000269" key="8">
    <source>
    </source>
</evidence>
<evidence type="ECO:0000269" key="9">
    <source>
    </source>
</evidence>
<evidence type="ECO:0000305" key="10"/>
<evidence type="ECO:0007744" key="11">
    <source>
    </source>
</evidence>
<protein>
    <recommendedName>
        <fullName>Scaffold attachment factor B1</fullName>
        <shortName>SAF-B</shortName>
        <shortName>SAF-B1</shortName>
    </recommendedName>
</protein>
<gene>
    <name type="primary">Safb</name>
    <name type="synonym">Safb1</name>
</gene>
<accession>O88453</accession>
<dbReference type="EMBL" id="AF056324">
    <property type="protein sequence ID" value="AAC29479.1"/>
    <property type="status" value="ALT_FRAME"/>
    <property type="molecule type" value="mRNA"/>
</dbReference>
<dbReference type="SMR" id="O88453"/>
<dbReference type="BioGRID" id="249003">
    <property type="interactions" value="11"/>
</dbReference>
<dbReference type="FunCoup" id="O88453">
    <property type="interactions" value="3014"/>
</dbReference>
<dbReference type="IntAct" id="O88453">
    <property type="interactions" value="3"/>
</dbReference>
<dbReference type="MINT" id="O88453"/>
<dbReference type="STRING" id="10116.ENSRNOP00000071054"/>
<dbReference type="iPTMnet" id="O88453"/>
<dbReference type="PhosphoSitePlus" id="O88453"/>
<dbReference type="jPOST" id="O88453"/>
<dbReference type="PaxDb" id="10116-ENSRNOP00000066884"/>
<dbReference type="AGR" id="RGD:620613"/>
<dbReference type="RGD" id="620613">
    <property type="gene designation" value="Safb"/>
</dbReference>
<dbReference type="eggNOG" id="KOG4661">
    <property type="taxonomic scope" value="Eukaryota"/>
</dbReference>
<dbReference type="InParanoid" id="O88453"/>
<dbReference type="PhylomeDB" id="O88453"/>
<dbReference type="Reactome" id="R-RNO-3899300">
    <property type="pathway name" value="SUMOylation of transcription cofactors"/>
</dbReference>
<dbReference type="PRO" id="PR:O88453"/>
<dbReference type="Proteomes" id="UP000002494">
    <property type="component" value="Unplaced"/>
</dbReference>
<dbReference type="GO" id="GO:0005634">
    <property type="term" value="C:nucleus"/>
    <property type="evidence" value="ECO:0000266"/>
    <property type="project" value="RGD"/>
</dbReference>
<dbReference type="GO" id="GO:0003682">
    <property type="term" value="F:chromatin binding"/>
    <property type="evidence" value="ECO:0000250"/>
    <property type="project" value="UniProtKB"/>
</dbReference>
<dbReference type="GO" id="GO:0003723">
    <property type="term" value="F:RNA binding"/>
    <property type="evidence" value="ECO:0007669"/>
    <property type="project" value="UniProtKB-KW"/>
</dbReference>
<dbReference type="GO" id="GO:0000978">
    <property type="term" value="F:RNA polymerase II cis-regulatory region sequence-specific DNA binding"/>
    <property type="evidence" value="ECO:0000250"/>
    <property type="project" value="UniProtKB"/>
</dbReference>
<dbReference type="GO" id="GO:0043565">
    <property type="term" value="F:sequence-specific DNA binding"/>
    <property type="evidence" value="ECO:0000314"/>
    <property type="project" value="RGD"/>
</dbReference>
<dbReference type="GO" id="GO:0030520">
    <property type="term" value="P:estrogen receptor signaling pathway"/>
    <property type="evidence" value="ECO:0000266"/>
    <property type="project" value="RGD"/>
</dbReference>
<dbReference type="GO" id="GO:0042445">
    <property type="term" value="P:hormone metabolic process"/>
    <property type="evidence" value="ECO:0000266"/>
    <property type="project" value="RGD"/>
</dbReference>
<dbReference type="GO" id="GO:0045944">
    <property type="term" value="P:positive regulation of transcription by RNA polymerase II"/>
    <property type="evidence" value="ECO:0000266"/>
    <property type="project" value="RGD"/>
</dbReference>
<dbReference type="GO" id="GO:0060765">
    <property type="term" value="P:regulation of androgen receptor signaling pathway"/>
    <property type="evidence" value="ECO:0000318"/>
    <property type="project" value="GO_Central"/>
</dbReference>
<dbReference type="GO" id="GO:0040008">
    <property type="term" value="P:regulation of growth"/>
    <property type="evidence" value="ECO:0000266"/>
    <property type="project" value="RGD"/>
</dbReference>
<dbReference type="GO" id="GO:0050684">
    <property type="term" value="P:regulation of mRNA processing"/>
    <property type="evidence" value="ECO:0000314"/>
    <property type="project" value="RGD"/>
</dbReference>
<dbReference type="GO" id="GO:0006357">
    <property type="term" value="P:regulation of transcription by RNA polymerase II"/>
    <property type="evidence" value="ECO:0000314"/>
    <property type="project" value="RGD"/>
</dbReference>
<dbReference type="CDD" id="cd12679">
    <property type="entry name" value="RRM_SAFB1_SAFB2"/>
    <property type="match status" value="1"/>
</dbReference>
<dbReference type="FunFam" id="3.30.70.330:FF:000197">
    <property type="entry name" value="Scaffold attachment factor B2"/>
    <property type="match status" value="1"/>
</dbReference>
<dbReference type="FunFam" id="1.10.720.30:FF:000005">
    <property type="entry name" value="scaffold attachment factor B2 isoform X1"/>
    <property type="match status" value="1"/>
</dbReference>
<dbReference type="Gene3D" id="3.30.70.330">
    <property type="match status" value="1"/>
</dbReference>
<dbReference type="Gene3D" id="1.10.720.30">
    <property type="entry name" value="SAP domain"/>
    <property type="match status" value="1"/>
</dbReference>
<dbReference type="InterPro" id="IPR012677">
    <property type="entry name" value="Nucleotide-bd_a/b_plait_sf"/>
</dbReference>
<dbReference type="InterPro" id="IPR035979">
    <property type="entry name" value="RBD_domain_sf"/>
</dbReference>
<dbReference type="InterPro" id="IPR000504">
    <property type="entry name" value="RRM_dom"/>
</dbReference>
<dbReference type="InterPro" id="IPR051738">
    <property type="entry name" value="SAF_Modulators"/>
</dbReference>
<dbReference type="InterPro" id="IPR034781">
    <property type="entry name" value="SAFB1_2_RBD"/>
</dbReference>
<dbReference type="InterPro" id="IPR003034">
    <property type="entry name" value="SAP_dom"/>
</dbReference>
<dbReference type="InterPro" id="IPR036361">
    <property type="entry name" value="SAP_dom_sf"/>
</dbReference>
<dbReference type="PANTHER" id="PTHR15683">
    <property type="entry name" value="SCAFFOLD ATTACHMENT FACTOR B-RELATED"/>
    <property type="match status" value="1"/>
</dbReference>
<dbReference type="PANTHER" id="PTHR15683:SF6">
    <property type="entry name" value="SCAFFOLD ATTACHMENT FACTOR B1"/>
    <property type="match status" value="1"/>
</dbReference>
<dbReference type="Pfam" id="PF00076">
    <property type="entry name" value="RRM_1"/>
    <property type="match status" value="1"/>
</dbReference>
<dbReference type="Pfam" id="PF02037">
    <property type="entry name" value="SAP"/>
    <property type="match status" value="1"/>
</dbReference>
<dbReference type="SMART" id="SM00360">
    <property type="entry name" value="RRM"/>
    <property type="match status" value="1"/>
</dbReference>
<dbReference type="SMART" id="SM00513">
    <property type="entry name" value="SAP"/>
    <property type="match status" value="1"/>
</dbReference>
<dbReference type="SUPFAM" id="SSF54928">
    <property type="entry name" value="RNA-binding domain, RBD"/>
    <property type="match status" value="1"/>
</dbReference>
<dbReference type="SUPFAM" id="SSF68906">
    <property type="entry name" value="SAP domain"/>
    <property type="match status" value="1"/>
</dbReference>
<dbReference type="PROSITE" id="PS50102">
    <property type="entry name" value="RRM"/>
    <property type="match status" value="1"/>
</dbReference>
<dbReference type="PROSITE" id="PS50800">
    <property type="entry name" value="SAP"/>
    <property type="match status" value="1"/>
</dbReference>
<name>SAFB1_RAT</name>
<organism>
    <name type="scientific">Rattus norvegicus</name>
    <name type="common">Rat</name>
    <dbReference type="NCBI Taxonomy" id="10116"/>
    <lineage>
        <taxon>Eukaryota</taxon>
        <taxon>Metazoa</taxon>
        <taxon>Chordata</taxon>
        <taxon>Craniata</taxon>
        <taxon>Vertebrata</taxon>
        <taxon>Euteleostomi</taxon>
        <taxon>Mammalia</taxon>
        <taxon>Eutheria</taxon>
        <taxon>Euarchontoglires</taxon>
        <taxon>Glires</taxon>
        <taxon>Rodentia</taxon>
        <taxon>Myomorpha</taxon>
        <taxon>Muroidea</taxon>
        <taxon>Muridae</taxon>
        <taxon>Murinae</taxon>
        <taxon>Rattus</taxon>
    </lineage>
</organism>
<proteinExistence type="evidence at protein level"/>